<dbReference type="EC" id="2.4.1.-" evidence="1"/>
<dbReference type="EC" id="2.4.2.-" evidence="1"/>
<dbReference type="EMBL" id="BC093594">
    <property type="protein sequence ID" value="AAH93594.1"/>
    <property type="molecule type" value="mRNA"/>
</dbReference>
<dbReference type="EMBL" id="BC100617">
    <property type="protein sequence ID" value="AAI00618.1"/>
    <property type="molecule type" value="mRNA"/>
</dbReference>
<dbReference type="RefSeq" id="NP_001020294.3">
    <property type="nucleotide sequence ID" value="NM_001025123.3"/>
</dbReference>
<dbReference type="SMR" id="Q566E5"/>
<dbReference type="FunCoup" id="Q566E5">
    <property type="interactions" value="683"/>
</dbReference>
<dbReference type="STRING" id="10116.ENSRNOP00000009497"/>
<dbReference type="CAZy" id="GT90">
    <property type="family name" value="Glycosyltransferase Family 90"/>
</dbReference>
<dbReference type="GlyCosmos" id="Q566E5">
    <property type="glycosylation" value="1 site, No reported glycans"/>
</dbReference>
<dbReference type="GlyGen" id="Q566E5">
    <property type="glycosylation" value="1 site"/>
</dbReference>
<dbReference type="PhosphoSitePlus" id="Q566E5"/>
<dbReference type="jPOST" id="Q566E5"/>
<dbReference type="PaxDb" id="10116-ENSRNOP00000009497"/>
<dbReference type="Ensembl" id="ENSRNOT00000009497.6">
    <property type="protein sequence ID" value="ENSRNOP00000009497.5"/>
    <property type="gene ID" value="ENSRNOG00000007177.6"/>
</dbReference>
<dbReference type="GeneID" id="315664"/>
<dbReference type="KEGG" id="rno:315664"/>
<dbReference type="UCSC" id="RGD:1562027">
    <property type="organism name" value="rat"/>
</dbReference>
<dbReference type="AGR" id="RGD:1562027"/>
<dbReference type="CTD" id="143888"/>
<dbReference type="RGD" id="1562027">
    <property type="gene designation" value="Poglut3"/>
</dbReference>
<dbReference type="eggNOG" id="KOG2458">
    <property type="taxonomic scope" value="Eukaryota"/>
</dbReference>
<dbReference type="GeneTree" id="ENSGT00940000159028"/>
<dbReference type="HOGENOM" id="CLU_041919_0_0_1"/>
<dbReference type="InParanoid" id="Q566E5"/>
<dbReference type="OMA" id="GITAWFF"/>
<dbReference type="OrthoDB" id="29808at9989"/>
<dbReference type="PhylomeDB" id="Q566E5"/>
<dbReference type="TreeFam" id="TF323280"/>
<dbReference type="UniPathway" id="UPA00378"/>
<dbReference type="PRO" id="PR:Q566E5"/>
<dbReference type="Proteomes" id="UP000002494">
    <property type="component" value="Chromosome 8"/>
</dbReference>
<dbReference type="Bgee" id="ENSRNOG00000007177">
    <property type="expression patterns" value="Expressed in ovary and 20 other cell types or tissues"/>
</dbReference>
<dbReference type="GO" id="GO:0012505">
    <property type="term" value="C:endomembrane system"/>
    <property type="evidence" value="ECO:0000318"/>
    <property type="project" value="GO_Central"/>
</dbReference>
<dbReference type="GO" id="GO:0005788">
    <property type="term" value="C:endoplasmic reticulum lumen"/>
    <property type="evidence" value="ECO:0007669"/>
    <property type="project" value="UniProtKB-SubCell"/>
</dbReference>
<dbReference type="GO" id="GO:0140561">
    <property type="term" value="F:EGF-domain serine glucosyltransferase activity"/>
    <property type="evidence" value="ECO:0007669"/>
    <property type="project" value="RHEA"/>
</dbReference>
<dbReference type="GO" id="GO:0140562">
    <property type="term" value="F:EGF-domain serine xylosyltransferase activity"/>
    <property type="evidence" value="ECO:0007669"/>
    <property type="project" value="RHEA"/>
</dbReference>
<dbReference type="GO" id="GO:0046527">
    <property type="term" value="F:glucosyltransferase activity"/>
    <property type="evidence" value="ECO:0000318"/>
    <property type="project" value="GO_Central"/>
</dbReference>
<dbReference type="GO" id="GO:0035251">
    <property type="term" value="F:UDP-glucosyltransferase activity"/>
    <property type="evidence" value="ECO:0000250"/>
    <property type="project" value="UniProtKB"/>
</dbReference>
<dbReference type="GO" id="GO:0035252">
    <property type="term" value="F:UDP-xylosyltransferase activity"/>
    <property type="evidence" value="ECO:0000250"/>
    <property type="project" value="UniProtKB"/>
</dbReference>
<dbReference type="GO" id="GO:0018242">
    <property type="term" value="P:protein O-linked glycosylation via serine"/>
    <property type="evidence" value="ECO:0000250"/>
    <property type="project" value="UniProtKB"/>
</dbReference>
<dbReference type="FunFam" id="2.60.40.10:FF:000419">
    <property type="entry name" value="KDEL (Lys-Asp-Glu-Leu) containing 1"/>
    <property type="match status" value="1"/>
</dbReference>
<dbReference type="Gene3D" id="2.60.40.10">
    <property type="entry name" value="Immunoglobulins"/>
    <property type="match status" value="1"/>
</dbReference>
<dbReference type="InterPro" id="IPR006598">
    <property type="entry name" value="CAP10"/>
</dbReference>
<dbReference type="InterPro" id="IPR017868">
    <property type="entry name" value="Filamin/ABP280_repeat-like"/>
</dbReference>
<dbReference type="InterPro" id="IPR001298">
    <property type="entry name" value="Filamin/ABP280_rpt"/>
</dbReference>
<dbReference type="InterPro" id="IPR013783">
    <property type="entry name" value="Ig-like_fold"/>
</dbReference>
<dbReference type="InterPro" id="IPR014756">
    <property type="entry name" value="Ig_E-set"/>
</dbReference>
<dbReference type="InterPro" id="IPR051091">
    <property type="entry name" value="O-Glucosyltr/Glycosyltrsf_90"/>
</dbReference>
<dbReference type="PANTHER" id="PTHR12203">
    <property type="entry name" value="KDEL LYS-ASP-GLU-LEU CONTAINING - RELATED"/>
    <property type="match status" value="1"/>
</dbReference>
<dbReference type="PANTHER" id="PTHR12203:SF18">
    <property type="entry name" value="PROTEIN O-GLUCOSYLTRANSFERASE 3"/>
    <property type="match status" value="1"/>
</dbReference>
<dbReference type="Pfam" id="PF00630">
    <property type="entry name" value="Filamin"/>
    <property type="match status" value="1"/>
</dbReference>
<dbReference type="Pfam" id="PF05686">
    <property type="entry name" value="Glyco_transf_90"/>
    <property type="match status" value="1"/>
</dbReference>
<dbReference type="SMART" id="SM00672">
    <property type="entry name" value="CAP10"/>
    <property type="match status" value="1"/>
</dbReference>
<dbReference type="SMART" id="SM00557">
    <property type="entry name" value="IG_FLMN"/>
    <property type="match status" value="1"/>
</dbReference>
<dbReference type="SUPFAM" id="SSF81296">
    <property type="entry name" value="E set domains"/>
    <property type="match status" value="1"/>
</dbReference>
<dbReference type="PROSITE" id="PS00014">
    <property type="entry name" value="ER_TARGET"/>
    <property type="match status" value="1"/>
</dbReference>
<dbReference type="PROSITE" id="PS50194">
    <property type="entry name" value="FILAMIN_REPEAT"/>
    <property type="match status" value="1"/>
</dbReference>
<protein>
    <recommendedName>
        <fullName evidence="5">Protein O-glucosyltransferase 3</fullName>
        <ecNumber evidence="1">2.4.1.-</ecNumber>
    </recommendedName>
    <alternativeName>
        <fullName evidence="6">KDEL motif-containing protein 2</fullName>
    </alternativeName>
    <alternativeName>
        <fullName evidence="5">Protein O-xylosyltransferase POGLUT3</fullName>
        <ecNumber evidence="1">2.4.2.-</ecNumber>
    </alternativeName>
</protein>
<accession>Q566E5</accession>
<accession>Q497C8</accession>
<keyword id="KW-0256">Endoplasmic reticulum</keyword>
<keyword id="KW-0325">Glycoprotein</keyword>
<keyword id="KW-0328">Glycosyltransferase</keyword>
<keyword id="KW-1185">Reference proteome</keyword>
<keyword id="KW-0732">Signal</keyword>
<keyword id="KW-0808">Transferase</keyword>
<feature type="signal peptide" evidence="2">
    <location>
        <begin position="1"/>
        <end position="24"/>
    </location>
</feature>
<feature type="chain" id="PRO_0000247197" description="Protein O-glucosyltransferase 3">
    <location>
        <begin position="25"/>
        <end position="508"/>
    </location>
</feature>
<feature type="repeat" description="Filamin">
    <location>
        <begin position="25"/>
        <end position="134"/>
    </location>
</feature>
<feature type="region of interest" description="Disordered" evidence="4">
    <location>
        <begin position="480"/>
        <end position="508"/>
    </location>
</feature>
<feature type="short sequence motif" description="Prevents secretion from ER" evidence="3">
    <location>
        <begin position="505"/>
        <end position="508"/>
    </location>
</feature>
<feature type="glycosylation site" description="N-linked (GlcNAc...) asparagine" evidence="2">
    <location>
        <position position="307"/>
    </location>
</feature>
<feature type="sequence conflict" description="In Ref. 1; AAI00618." evidence="5" ref="1">
    <original>R</original>
    <variation>C</variation>
    <location>
        <position position="496"/>
    </location>
</feature>
<sequence>MLGVRRALLLPPLQLALLVAAGTGARVSAPRSLAWGPGLHADAVLPVRYFFLQSVDSDGRNFTSSPPGQTQFKVVVKSLSPKELVRIYVPKPLDRNDGTFLVRYRMHETVHEGLKIEILYGGEHVAQSPYILKGPVYHEYCDCPEDDPQAWQKTLSCPANEPQIEQDFISFPSINLQQMLKEVPKRFGDERGAIVHYTILNNHIYRRSLGKYTDFKMFSDEILLSLARKVTLPDLEFYINLGDWPLEHRKVNDTPGPIPIISWCGSLDSRDIILPTYDVTHSTLEAMRGVTNDLLSVQGNTGPSWINKTEKAFFRGRDSREERLQLVLLSKENPQLLDAGITGYFFFQEKEKELGKAKLMGFFDFFKYKYQVNVDGTVAAYRYPYLMLGDSLVLKQESPYYEHFYVELRPWKHYVPIKRNLSDLLEKVKWAKENDEEAKRIAKEGQLTARDLLQPPRLYCYYYRVLQKYAERQVSKPMIRDGMERVPQPDDSTSVRQCHRKRPEREEL</sequence>
<comment type="function">
    <text evidence="1">Protein glucosyltransferase that catalyzes the transfer of glucose from UDP-glucose to a serine residue within the consensus sequence peptide C-X-N-T-X-G-S-F-X-C. Can also catalyze the transfer of xylose from UDP-xylose but less efficiently. Specifically targets extracellular EGF repeats of proteins such as NOTCH1, NOTCH3, FBN1, FBN2 and LTBP1. May regulate the transport of NOTCH1 and NOTCH3 to the plasma membrane and thereby the Notch signaling pathway.</text>
</comment>
<comment type="catalytic activity">
    <reaction evidence="1">
        <text>L-seryl-[EGF-like domain protein] + UDP-alpha-D-glucose = 3-O-(beta-D-glucosyl)-L-seryl-[EGF-like domain protein] + UDP + H(+)</text>
        <dbReference type="Rhea" id="RHEA:58116"/>
        <dbReference type="Rhea" id="RHEA-COMP:14610"/>
        <dbReference type="Rhea" id="RHEA-COMP:16010"/>
        <dbReference type="ChEBI" id="CHEBI:15378"/>
        <dbReference type="ChEBI" id="CHEBI:29999"/>
        <dbReference type="ChEBI" id="CHEBI:58223"/>
        <dbReference type="ChEBI" id="CHEBI:58885"/>
        <dbReference type="ChEBI" id="CHEBI:140576"/>
    </reaction>
</comment>
<comment type="catalytic activity">
    <reaction evidence="1">
        <text>L-seryl-[EGF-like domain protein] + UDP-alpha-D-xylose = 3-O-(beta-D-xylosyl)-L-seryl-[EGF-like domain protein] + UDP + H(+)</text>
        <dbReference type="Rhea" id="RHEA:62016"/>
        <dbReference type="Rhea" id="RHEA-COMP:16010"/>
        <dbReference type="Rhea" id="RHEA-COMP:16011"/>
        <dbReference type="ChEBI" id="CHEBI:15378"/>
        <dbReference type="ChEBI" id="CHEBI:29999"/>
        <dbReference type="ChEBI" id="CHEBI:57632"/>
        <dbReference type="ChEBI" id="CHEBI:58223"/>
        <dbReference type="ChEBI" id="CHEBI:132085"/>
    </reaction>
</comment>
<comment type="pathway">
    <text evidence="1">Protein modification; protein glycosylation.</text>
</comment>
<comment type="subcellular location">
    <subcellularLocation>
        <location evidence="3">Endoplasmic reticulum lumen</location>
    </subcellularLocation>
</comment>
<comment type="similarity">
    <text evidence="5">Belongs to the KDELC family.</text>
</comment>
<gene>
    <name type="primary">Poglut3</name>
    <name evidence="6" type="synonym">Kdelc2</name>
</gene>
<organism>
    <name type="scientific">Rattus norvegicus</name>
    <name type="common">Rat</name>
    <dbReference type="NCBI Taxonomy" id="10116"/>
    <lineage>
        <taxon>Eukaryota</taxon>
        <taxon>Metazoa</taxon>
        <taxon>Chordata</taxon>
        <taxon>Craniata</taxon>
        <taxon>Vertebrata</taxon>
        <taxon>Euteleostomi</taxon>
        <taxon>Mammalia</taxon>
        <taxon>Eutheria</taxon>
        <taxon>Euarchontoglires</taxon>
        <taxon>Glires</taxon>
        <taxon>Rodentia</taxon>
        <taxon>Myomorpha</taxon>
        <taxon>Muroidea</taxon>
        <taxon>Muridae</taxon>
        <taxon>Murinae</taxon>
        <taxon>Rattus</taxon>
    </lineage>
</organism>
<reference key="1">
    <citation type="journal article" date="2004" name="Genome Res.">
        <title>The status, quality, and expansion of the NIH full-length cDNA project: the Mammalian Gene Collection (MGC).</title>
        <authorList>
            <consortium name="The MGC Project Team"/>
        </authorList>
    </citation>
    <scope>NUCLEOTIDE SEQUENCE [LARGE SCALE MRNA]</scope>
    <source>
        <tissue>Brain</tissue>
        <tissue>Prostate</tissue>
    </source>
</reference>
<name>PLGT3_RAT</name>
<evidence type="ECO:0000250" key="1">
    <source>
        <dbReference type="UniProtKB" id="Q7Z4H8"/>
    </source>
</evidence>
<evidence type="ECO:0000255" key="2"/>
<evidence type="ECO:0000255" key="3">
    <source>
        <dbReference type="PROSITE-ProRule" id="PRU10138"/>
    </source>
</evidence>
<evidence type="ECO:0000256" key="4">
    <source>
        <dbReference type="SAM" id="MobiDB-lite"/>
    </source>
</evidence>
<evidence type="ECO:0000305" key="5"/>
<evidence type="ECO:0000312" key="6">
    <source>
        <dbReference type="RGD" id="1562027"/>
    </source>
</evidence>
<proteinExistence type="evidence at transcript level"/>